<evidence type="ECO:0000250" key="1">
    <source>
        <dbReference type="UniProtKB" id="O43463"/>
    </source>
</evidence>
<evidence type="ECO:0000250" key="2">
    <source>
        <dbReference type="UniProtKB" id="Q5DW34"/>
    </source>
</evidence>
<evidence type="ECO:0000250" key="3">
    <source>
        <dbReference type="UniProtKB" id="Q9H5I1"/>
    </source>
</evidence>
<evidence type="ECO:0000255" key="4">
    <source>
        <dbReference type="PROSITE-ProRule" id="PRU00042"/>
    </source>
</evidence>
<evidence type="ECO:0000255" key="5">
    <source>
        <dbReference type="PROSITE-ProRule" id="PRU00155"/>
    </source>
</evidence>
<evidence type="ECO:0000255" key="6">
    <source>
        <dbReference type="PROSITE-ProRule" id="PRU00157"/>
    </source>
</evidence>
<evidence type="ECO:0000255" key="7">
    <source>
        <dbReference type="PROSITE-ProRule" id="PRU00190"/>
    </source>
</evidence>
<evidence type="ECO:0000256" key="8">
    <source>
        <dbReference type="SAM" id="MobiDB-lite"/>
    </source>
</evidence>
<evidence type="ECO:0000269" key="9">
    <source>
    </source>
</evidence>
<evidence type="ECO:0000269" key="10">
    <source>
    </source>
</evidence>
<evidence type="ECO:0000303" key="11">
    <source>
    </source>
</evidence>
<evidence type="ECO:0000303" key="12">
    <source>
    </source>
</evidence>
<evidence type="ECO:0000305" key="13"/>
<evidence type="ECO:0000312" key="14">
    <source>
        <dbReference type="Araport" id="AT2G23740"/>
    </source>
</evidence>
<evidence type="ECO:0000312" key="15">
    <source>
        <dbReference type="EMBL" id="AAC17088.1"/>
    </source>
</evidence>
<evidence type="ECO:0000312" key="16">
    <source>
        <dbReference type="EMBL" id="AAC17089.1"/>
    </source>
</evidence>
<evidence type="ECO:0000312" key="17">
    <source>
        <dbReference type="EMBL" id="AAC17099.1"/>
    </source>
</evidence>
<sequence length="1382" mass="155767">MEVKMDELVLDVDVEEATGSELLVKSEPEADLNAVKSSTDLVTVTGPIGKNGEGESSPSEPKWLQQDEPIALWVKWRGKWQAGIRCAKADWPLTTLRGKPTHDRKKYCVIFFPHTKNYSWADMQLVRSINEFPDPIAYKSHKIGLKLVKDLTAARRYIMRKLTVGMFNIVDQFPSEVVSEAARDIIIWKEFAMEATRSTSYHDLGIMLVKLHSMILQRYMDPIWLENSFPLWVQKCNNAVNAESIELLNEEFDNCIKWNEVKSLSESPMQPMLLSEWKTWKHDIAKWFSISRRGVGEIAQPDSKSVFNSDVQASRKRPKLEIRRAETTNATHMESDTSPQGLSAIDSEFFSSRGNTNSPETMKEENPVMNTPENGLDLWDGIVVEAGGSQFMKTKETNGLSHPQDQHINESVLKKPFGSGNKSQQCIAFIESKGRQCVRWANEGDVYCCVHLASRFTTKSMKNEGSPAVEAPMCGGVTVLGTKCKHRSLPGFLYCKKHRPHTGMVKPDDSSSFLVKRKVSEIMSTLETNQCQDLVPFGEPEGPSFEKQEPHGATSFTEMFEHCSQEDNLCIGSCSENSYISCSEFSTKHSLYCEQHLPNWLKRARNGKSRIISKEVFVDLLRGCLSREEKLALHQACDIFYKLFKSVLSLRNSVPMEVQIDWAKTEASRNADAGVGEFLMKLVSNERERLTRIWGFATGADEEDVSLSEYPNRLLAITNTCDDDDDKEKWSFSGFACAICLDSFVRRKLLEIHVEERHHVQFAEKCMLLQCIPCGSHFGDKEQLLVHVQAVHPSECKSLTVASECNLTNGEFSQKPEAGSSQIVVSQNNENTSGVHKFVCKFCGLKFNLLPDLGRHHQAEHMGPSLVGSRGPKKGIRFNTYRMKSGRLSRPNKFKKSLGAVSYRIRNRAGVNMKRRMQGSKSLGTEGNTEAGVSPPLDDSRNFDGVTDAHCSVVSDILLSKVQKAKHRPNNLDILSAARSACCRVSVETSLEAKFGDLPDRIYLKAAKLCGEQGVQVQWHQEGYICSNGCKPVKDPNLLHPLIPRQENDRFGIAVDAGQHSNIELEVDECHCIMEAHHFSKRPFGNTAVLCKDISFGKESVPICVVDDDLWNSEKPYEMPWECFTYVTNSILHPSMDLVKENLQLRCSCRSSVCSPVTCDHVYLFGNDFEDARDIYGKSMRCRFPYDGKQRIILEEGYPVYECNKFCGCSRTCQNRVLQNGIRAKLEVFRTESKGWGLRACEHILRGTFVCEYIGEVLDQQEANKRRNQYGNGDCSYILDIDANINDIGRLMEEELDYAIDATTHGNISRFINHSCSPNLVNHQVIVESMESPLAHIGLYASMDIAAGEEITRDYGRRPVPSEQENEHPCHCKATNCRGLLS</sequence>
<feature type="chain" id="PRO_0000233369" description="Histone-lysine N-methyltransferase SUVR5">
    <location>
        <begin position="1"/>
        <end position="1382"/>
    </location>
</feature>
<feature type="domain" description="Pre-SET" evidence="6">
    <location>
        <begin position="1145"/>
        <end position="1221"/>
    </location>
</feature>
<feature type="domain" description="SET" evidence="7">
    <location>
        <begin position="1224"/>
        <end position="1356"/>
    </location>
</feature>
<feature type="domain" description="Post-SET" evidence="5">
    <location>
        <begin position="1366"/>
        <end position="1382"/>
    </location>
</feature>
<feature type="zinc finger region" description="C2H2-type 1" evidence="4">
    <location>
        <begin position="735"/>
        <end position="758"/>
    </location>
</feature>
<feature type="zinc finger region" description="C2H2-type 2" evidence="4">
    <location>
        <begin position="769"/>
        <end position="792"/>
    </location>
</feature>
<feature type="zinc finger region" description="C2H2-type 3" evidence="4">
    <location>
        <begin position="838"/>
        <end position="861"/>
    </location>
</feature>
<feature type="region of interest" description="Disordered" evidence="8">
    <location>
        <begin position="43"/>
        <end position="62"/>
    </location>
</feature>
<feature type="region of interest" description="Disordered" evidence="8">
    <location>
        <begin position="354"/>
        <end position="373"/>
    </location>
</feature>
<feature type="region of interest" description="Disordered" evidence="8">
    <location>
        <begin position="915"/>
        <end position="935"/>
    </location>
</feature>
<feature type="compositionally biased region" description="Polar residues" evidence="8">
    <location>
        <begin position="919"/>
        <end position="928"/>
    </location>
</feature>
<feature type="binding site" evidence="3">
    <location>
        <position position="1147"/>
    </location>
    <ligand>
        <name>Zn(2+)</name>
        <dbReference type="ChEBI" id="CHEBI:29105"/>
        <label>1</label>
    </ligand>
</feature>
<feature type="binding site" evidence="3">
    <location>
        <position position="1147"/>
    </location>
    <ligand>
        <name>Zn(2+)</name>
        <dbReference type="ChEBI" id="CHEBI:29105"/>
        <label>2</label>
    </ligand>
</feature>
<feature type="binding site" evidence="3">
    <location>
        <position position="1149"/>
    </location>
    <ligand>
        <name>Zn(2+)</name>
        <dbReference type="ChEBI" id="CHEBI:29105"/>
        <label>1</label>
    </ligand>
</feature>
<feature type="binding site" evidence="3">
    <location>
        <position position="1154"/>
    </location>
    <ligand>
        <name>Zn(2+)</name>
        <dbReference type="ChEBI" id="CHEBI:29105"/>
        <label>1</label>
    </ligand>
</feature>
<feature type="binding site" evidence="3">
    <location>
        <position position="1154"/>
    </location>
    <ligand>
        <name>Zn(2+)</name>
        <dbReference type="ChEBI" id="CHEBI:29105"/>
        <label>3</label>
    </ligand>
</feature>
<feature type="binding site" evidence="3">
    <location>
        <position position="1159"/>
    </location>
    <ligand>
        <name>Zn(2+)</name>
        <dbReference type="ChEBI" id="CHEBI:29105"/>
        <label>1</label>
    </ligand>
</feature>
<feature type="binding site" evidence="3">
    <location>
        <position position="1182"/>
    </location>
    <ligand>
        <name>Zn(2+)</name>
        <dbReference type="ChEBI" id="CHEBI:29105"/>
        <label>2</label>
    </ligand>
</feature>
<feature type="binding site" evidence="3">
    <location>
        <position position="1203"/>
    </location>
    <ligand>
        <name>Zn(2+)</name>
        <dbReference type="ChEBI" id="CHEBI:29105"/>
        <label>2</label>
    </ligand>
</feature>
<feature type="binding site" evidence="3">
    <location>
        <position position="1203"/>
    </location>
    <ligand>
        <name>Zn(2+)</name>
        <dbReference type="ChEBI" id="CHEBI:29105"/>
        <label>3</label>
    </ligand>
</feature>
<feature type="binding site" evidence="3">
    <location>
        <position position="1207"/>
    </location>
    <ligand>
        <name>Zn(2+)</name>
        <dbReference type="ChEBI" id="CHEBI:29105"/>
        <label>2</label>
    </ligand>
</feature>
<feature type="binding site" evidence="3">
    <location>
        <position position="1209"/>
    </location>
    <ligand>
        <name>Zn(2+)</name>
        <dbReference type="ChEBI" id="CHEBI:29105"/>
        <label>3</label>
    </ligand>
</feature>
<feature type="binding site" evidence="3">
    <location>
        <position position="1213"/>
    </location>
    <ligand>
        <name>Zn(2+)</name>
        <dbReference type="ChEBI" id="CHEBI:29105"/>
        <label>3</label>
    </ligand>
</feature>
<feature type="binding site" evidence="3">
    <location>
        <begin position="1234"/>
        <end position="1236"/>
    </location>
    <ligand>
        <name>S-adenosyl-L-methionine</name>
        <dbReference type="ChEBI" id="CHEBI:59789"/>
    </ligand>
</feature>
<feature type="binding site" evidence="7">
    <location>
        <position position="1277"/>
    </location>
    <ligand>
        <name>S-adenosyl-L-methionine</name>
        <dbReference type="ChEBI" id="CHEBI:59789"/>
    </ligand>
</feature>
<feature type="binding site" evidence="3">
    <location>
        <begin position="1313"/>
        <end position="1314"/>
    </location>
    <ligand>
        <name>S-adenosyl-L-methionine</name>
        <dbReference type="ChEBI" id="CHEBI:59789"/>
    </ligand>
</feature>
<feature type="binding site" evidence="3">
    <location>
        <position position="1316"/>
    </location>
    <ligand>
        <name>Zn(2+)</name>
        <dbReference type="ChEBI" id="CHEBI:29105"/>
        <label>4</label>
    </ligand>
</feature>
<feature type="binding site" evidence="7">
    <location>
        <position position="1355"/>
    </location>
    <ligand>
        <name>S-adenosyl-L-methionine</name>
        <dbReference type="ChEBI" id="CHEBI:59789"/>
    </ligand>
</feature>
<feature type="binding site" evidence="3">
    <location>
        <position position="1370"/>
    </location>
    <ligand>
        <name>Zn(2+)</name>
        <dbReference type="ChEBI" id="CHEBI:29105"/>
        <label>4</label>
    </ligand>
</feature>
<feature type="binding site" evidence="3">
    <location>
        <position position="1372"/>
    </location>
    <ligand>
        <name>Zn(2+)</name>
        <dbReference type="ChEBI" id="CHEBI:29105"/>
        <label>4</label>
    </ligand>
</feature>
<feature type="binding site" evidence="3">
    <location>
        <position position="1377"/>
    </location>
    <ligand>
        <name>Zn(2+)</name>
        <dbReference type="ChEBI" id="CHEBI:29105"/>
        <label>4</label>
    </ligand>
</feature>
<feature type="sequence conflict" description="In Ref. 1; AAZ83311." evidence="13" ref="1">
    <original>Y</original>
    <variation>H</variation>
    <location>
        <position position="881"/>
    </location>
</feature>
<dbReference type="EC" id="2.1.1.-" evidence="9"/>
<dbReference type="EMBL" id="AC004482">
    <property type="protein sequence ID" value="AAC17088.1"/>
    <property type="status" value="ALT_SEQ"/>
    <property type="molecule type" value="Genomic_DNA"/>
</dbReference>
<dbReference type="EMBL" id="AC004482">
    <property type="protein sequence ID" value="AAC17089.1"/>
    <property type="status" value="ALT_SEQ"/>
    <property type="molecule type" value="Genomic_DNA"/>
</dbReference>
<dbReference type="EMBL" id="AC004482">
    <property type="protein sequence ID" value="AAC17099.1"/>
    <property type="status" value="ALT_SEQ"/>
    <property type="molecule type" value="Genomic_DNA"/>
</dbReference>
<dbReference type="EMBL" id="CP002685">
    <property type="protein sequence ID" value="AEC07484.1"/>
    <property type="molecule type" value="Genomic_DNA"/>
</dbReference>
<dbReference type="EMBL" id="CP002685">
    <property type="protein sequence ID" value="ANM62021.1"/>
    <property type="molecule type" value="Genomic_DNA"/>
</dbReference>
<dbReference type="EMBL" id="CP002685">
    <property type="protein sequence ID" value="ANM62024.1"/>
    <property type="molecule type" value="Genomic_DNA"/>
</dbReference>
<dbReference type="EMBL" id="AK317189">
    <property type="protein sequence ID" value="BAH19874.1"/>
    <property type="molecule type" value="mRNA"/>
</dbReference>
<dbReference type="EMBL" id="AK318822">
    <property type="protein sequence ID" value="BAH56937.1"/>
    <property type="molecule type" value="mRNA"/>
</dbReference>
<dbReference type="EMBL" id="DQ104397">
    <property type="protein sequence ID" value="AAZ83310.1"/>
    <property type="molecule type" value="Genomic_DNA"/>
</dbReference>
<dbReference type="EMBL" id="DQ104398">
    <property type="protein sequence ID" value="AAZ83311.1"/>
    <property type="molecule type" value="mRNA"/>
</dbReference>
<dbReference type="PIR" id="T02416">
    <property type="entry name" value="T02416"/>
</dbReference>
<dbReference type="PIR" id="T02417">
    <property type="entry name" value="T02417"/>
</dbReference>
<dbReference type="RefSeq" id="NP_001189585.1">
    <molecule id="O64827-1"/>
    <property type="nucleotide sequence ID" value="NM_001202656.2"/>
</dbReference>
<dbReference type="RefSeq" id="NP_001324204.1">
    <molecule id="O64827-1"/>
    <property type="nucleotide sequence ID" value="NM_001335864.1"/>
</dbReference>
<dbReference type="RefSeq" id="NP_001324207.1">
    <molecule id="O64827-1"/>
    <property type="nucleotide sequence ID" value="NM_001335861.1"/>
</dbReference>
<dbReference type="FunCoup" id="O64827">
    <property type="interactions" value="1344"/>
</dbReference>
<dbReference type="STRING" id="3702.O64827"/>
<dbReference type="iPTMnet" id="O64827"/>
<dbReference type="PaxDb" id="3702-AT2G23740.2"/>
<dbReference type="ProteomicsDB" id="226531">
    <molecule id="O64827-1"/>
</dbReference>
<dbReference type="EnsemblPlants" id="AT2G23740.2">
    <molecule id="O64827-1"/>
    <property type="protein sequence ID" value="AT2G23740.2"/>
    <property type="gene ID" value="AT2G23740"/>
</dbReference>
<dbReference type="EnsemblPlants" id="AT2G23740.3">
    <molecule id="O64827-1"/>
    <property type="protein sequence ID" value="AT2G23740.3"/>
    <property type="gene ID" value="AT2G23740"/>
</dbReference>
<dbReference type="EnsemblPlants" id="AT2G23740.6">
    <molecule id="O64827-1"/>
    <property type="protein sequence ID" value="AT2G23740.6"/>
    <property type="gene ID" value="AT2G23740"/>
</dbReference>
<dbReference type="GeneID" id="816905"/>
<dbReference type="Gramene" id="AT2G23740.2">
    <molecule id="O64827-1"/>
    <property type="protein sequence ID" value="AT2G23740.2"/>
    <property type="gene ID" value="AT2G23740"/>
</dbReference>
<dbReference type="Gramene" id="AT2G23740.3">
    <molecule id="O64827-1"/>
    <property type="protein sequence ID" value="AT2G23740.3"/>
    <property type="gene ID" value="AT2G23740"/>
</dbReference>
<dbReference type="Gramene" id="AT2G23740.6">
    <molecule id="O64827-1"/>
    <property type="protein sequence ID" value="AT2G23740.6"/>
    <property type="gene ID" value="AT2G23740"/>
</dbReference>
<dbReference type="KEGG" id="ath:AT2G23740"/>
<dbReference type="Araport" id="AT2G23740"/>
<dbReference type="TAIR" id="AT2G23740">
    <property type="gene designation" value="SUVR5"/>
</dbReference>
<dbReference type="eggNOG" id="KOG1082">
    <property type="taxonomic scope" value="Eukaryota"/>
</dbReference>
<dbReference type="eggNOG" id="KOG1721">
    <property type="taxonomic scope" value="Eukaryota"/>
</dbReference>
<dbReference type="InParanoid" id="O64827"/>
<dbReference type="OMA" id="RCARADC"/>
<dbReference type="PhylomeDB" id="O64827"/>
<dbReference type="PRO" id="PR:O64827"/>
<dbReference type="Proteomes" id="UP000006548">
    <property type="component" value="Chromosome 2"/>
</dbReference>
<dbReference type="ExpressionAtlas" id="O64827">
    <property type="expression patterns" value="baseline and differential"/>
</dbReference>
<dbReference type="GO" id="GO:0005694">
    <property type="term" value="C:chromosome"/>
    <property type="evidence" value="ECO:0007669"/>
    <property type="project" value="UniProtKB-SubCell"/>
</dbReference>
<dbReference type="GO" id="GO:0005634">
    <property type="term" value="C:nucleus"/>
    <property type="evidence" value="ECO:0000314"/>
    <property type="project" value="UniProtKB"/>
</dbReference>
<dbReference type="GO" id="GO:0003700">
    <property type="term" value="F:DNA-binding transcription factor activity"/>
    <property type="evidence" value="ECO:0000250"/>
    <property type="project" value="TAIR"/>
</dbReference>
<dbReference type="GO" id="GO:0140938">
    <property type="term" value="F:histone H3 methyltransferase activity"/>
    <property type="evidence" value="ECO:0000314"/>
    <property type="project" value="UniProtKB"/>
</dbReference>
<dbReference type="GO" id="GO:0043565">
    <property type="term" value="F:sequence-specific DNA binding"/>
    <property type="evidence" value="ECO:0000314"/>
    <property type="project" value="TAIR"/>
</dbReference>
<dbReference type="GO" id="GO:0008270">
    <property type="term" value="F:zinc ion binding"/>
    <property type="evidence" value="ECO:0007669"/>
    <property type="project" value="UniProtKB-KW"/>
</dbReference>
<dbReference type="GO" id="GO:0006338">
    <property type="term" value="P:chromatin remodeling"/>
    <property type="evidence" value="ECO:0000314"/>
    <property type="project" value="UniProtKB"/>
</dbReference>
<dbReference type="GO" id="GO:0032259">
    <property type="term" value="P:methylation"/>
    <property type="evidence" value="ECO:0007669"/>
    <property type="project" value="UniProtKB-KW"/>
</dbReference>
<dbReference type="GO" id="GO:0045814">
    <property type="term" value="P:negative regulation of gene expression, epigenetic"/>
    <property type="evidence" value="ECO:0000315"/>
    <property type="project" value="UniProtKB"/>
</dbReference>
<dbReference type="FunFam" id="2.170.270.10:FF:000109">
    <property type="entry name" value="Histone-lysine N-methyltransferase SUVR5"/>
    <property type="match status" value="1"/>
</dbReference>
<dbReference type="Gene3D" id="3.30.160.60">
    <property type="entry name" value="Classic Zinc Finger"/>
    <property type="match status" value="1"/>
</dbReference>
<dbReference type="Gene3D" id="2.170.270.10">
    <property type="entry name" value="SET domain"/>
    <property type="match status" value="1"/>
</dbReference>
<dbReference type="InterPro" id="IPR003616">
    <property type="entry name" value="Post-SET_dom"/>
</dbReference>
<dbReference type="InterPro" id="IPR007728">
    <property type="entry name" value="Pre-SET_dom"/>
</dbReference>
<dbReference type="InterPro" id="IPR001214">
    <property type="entry name" value="SET_dom"/>
</dbReference>
<dbReference type="InterPro" id="IPR046341">
    <property type="entry name" value="SET_dom_sf"/>
</dbReference>
<dbReference type="InterPro" id="IPR040689">
    <property type="entry name" value="SUVR5_Znf-C2H2_3rpt"/>
</dbReference>
<dbReference type="InterPro" id="IPR013087">
    <property type="entry name" value="Znf_C2H2_type"/>
</dbReference>
<dbReference type="PANTHER" id="PTHR47325">
    <property type="entry name" value="HISTONE-LYSINE N-METHYLTRANSFERASE SUVR5"/>
    <property type="match status" value="1"/>
</dbReference>
<dbReference type="PANTHER" id="PTHR47325:SF1">
    <property type="entry name" value="HISTONE-LYSINE N-METHYLTRANSFERASE SUVR5"/>
    <property type="match status" value="1"/>
</dbReference>
<dbReference type="Pfam" id="PF05033">
    <property type="entry name" value="Pre-SET"/>
    <property type="match status" value="1"/>
</dbReference>
<dbReference type="Pfam" id="PF00856">
    <property type="entry name" value="SET"/>
    <property type="match status" value="1"/>
</dbReference>
<dbReference type="Pfam" id="PF18868">
    <property type="entry name" value="zf-C2H2_3rep"/>
    <property type="match status" value="1"/>
</dbReference>
<dbReference type="SMART" id="SM00508">
    <property type="entry name" value="PostSET"/>
    <property type="match status" value="1"/>
</dbReference>
<dbReference type="SMART" id="SM00468">
    <property type="entry name" value="PreSET"/>
    <property type="match status" value="1"/>
</dbReference>
<dbReference type="SMART" id="SM00317">
    <property type="entry name" value="SET"/>
    <property type="match status" value="1"/>
</dbReference>
<dbReference type="SMART" id="SM00355">
    <property type="entry name" value="ZnF_C2H2"/>
    <property type="match status" value="3"/>
</dbReference>
<dbReference type="SUPFAM" id="SSF82199">
    <property type="entry name" value="SET domain"/>
    <property type="match status" value="1"/>
</dbReference>
<dbReference type="PROSITE" id="PS50868">
    <property type="entry name" value="POST_SET"/>
    <property type="match status" value="1"/>
</dbReference>
<dbReference type="PROSITE" id="PS50867">
    <property type="entry name" value="PRE_SET"/>
    <property type="match status" value="1"/>
</dbReference>
<dbReference type="PROSITE" id="PS50280">
    <property type="entry name" value="SET"/>
    <property type="match status" value="1"/>
</dbReference>
<dbReference type="PROSITE" id="PS00028">
    <property type="entry name" value="ZINC_FINGER_C2H2_1"/>
    <property type="match status" value="3"/>
</dbReference>
<dbReference type="PROSITE" id="PS50157">
    <property type="entry name" value="ZINC_FINGER_C2H2_2"/>
    <property type="match status" value="2"/>
</dbReference>
<keyword id="KW-0025">Alternative splicing</keyword>
<keyword id="KW-0156">Chromatin regulator</keyword>
<keyword id="KW-0158">Chromosome</keyword>
<keyword id="KW-0238">DNA-binding</keyword>
<keyword id="KW-0479">Metal-binding</keyword>
<keyword id="KW-0489">Methyltransferase</keyword>
<keyword id="KW-0539">Nucleus</keyword>
<keyword id="KW-1185">Reference proteome</keyword>
<keyword id="KW-0677">Repeat</keyword>
<keyword id="KW-0949">S-adenosyl-L-methionine</keyword>
<keyword id="KW-0808">Transferase</keyword>
<keyword id="KW-0862">Zinc</keyword>
<keyword id="KW-0863">Zinc-finger</keyword>
<accession>O64827</accession>
<accession>A0MA41</accession>
<accession>A0MA42</accession>
<accession>B9DGK7</accession>
<accession>C0Z2K8</accession>
<accession>O64828</accession>
<accession>O64829</accession>
<name>SUVR5_ARATH</name>
<reference key="1">
    <citation type="journal article" date="1999" name="Nature">
        <title>Sequence and analysis of chromosome 2 of the plant Arabidopsis thaliana.</title>
        <authorList>
            <person name="Lin X."/>
            <person name="Kaul S."/>
            <person name="Rounsley S.D."/>
            <person name="Shea T.P."/>
            <person name="Benito M.-I."/>
            <person name="Town C.D."/>
            <person name="Fujii C.Y."/>
            <person name="Mason T.M."/>
            <person name="Bowman C.L."/>
            <person name="Barnstead M.E."/>
            <person name="Feldblyum T.V."/>
            <person name="Buell C.R."/>
            <person name="Ketchum K.A."/>
            <person name="Lee J.J."/>
            <person name="Ronning C.M."/>
            <person name="Koo H.L."/>
            <person name="Moffat K.S."/>
            <person name="Cronin L.A."/>
            <person name="Shen M."/>
            <person name="Pai G."/>
            <person name="Van Aken S."/>
            <person name="Umayam L."/>
            <person name="Tallon L.J."/>
            <person name="Gill J.E."/>
            <person name="Adams M.D."/>
            <person name="Carrera A.J."/>
            <person name="Creasy T.H."/>
            <person name="Goodman H.M."/>
            <person name="Somerville C.R."/>
            <person name="Copenhaver G.P."/>
            <person name="Preuss D."/>
            <person name="Nierman W.C."/>
            <person name="White O."/>
            <person name="Eisen J.A."/>
            <person name="Salzberg S.L."/>
            <person name="Fraser C.M."/>
            <person name="Venter J.C."/>
        </authorList>
    </citation>
    <scope>NUCLEOTIDE SEQUENCE [LARGE SCALE GENOMIC DNA]</scope>
    <source>
        <strain>cv. Columbia</strain>
    </source>
</reference>
<reference key="2">
    <citation type="journal article" date="2017" name="Plant J.">
        <title>Araport11: a complete reannotation of the Arabidopsis thaliana reference genome.</title>
        <authorList>
            <person name="Cheng C.Y."/>
            <person name="Krishnakumar V."/>
            <person name="Chan A.P."/>
            <person name="Thibaud-Nissen F."/>
            <person name="Schobel S."/>
            <person name="Town C.D."/>
        </authorList>
    </citation>
    <scope>GENOME REANNOTATION</scope>
    <source>
        <strain>cv. Columbia</strain>
    </source>
</reference>
<reference key="3">
    <citation type="journal article" date="2009" name="DNA Res.">
        <title>Analysis of multiple occurrences of alternative splicing events in Arabidopsis thaliana using novel sequenced full-length cDNAs.</title>
        <authorList>
            <person name="Iida K."/>
            <person name="Fukami-Kobayashi K."/>
            <person name="Toyoda A."/>
            <person name="Sakaki Y."/>
            <person name="Kobayashi M."/>
            <person name="Seki M."/>
            <person name="Shinozaki K."/>
        </authorList>
    </citation>
    <scope>NUCLEOTIDE SEQUENCE [LARGE SCALE MRNA]</scope>
    <source>
        <strain>cv. Columbia</strain>
    </source>
</reference>
<reference key="4">
    <citation type="journal article" date="2007" name="Dev. Biol.">
        <title>C2H2 zinc finger-SET histone methyltransferase is a plant-specific chromatin modifier.</title>
        <authorList>
            <person name="Krichevsky A."/>
            <person name="Gutgarts H."/>
            <person name="Kozlovsky S.V."/>
            <person name="Tzfira T."/>
            <person name="Sutton A."/>
            <person name="Sternglanz R."/>
            <person name="Mandel G."/>
            <person name="Citovsky V."/>
        </authorList>
    </citation>
    <scope>NUCLEOTIDE SEQUENCE [GENOMIC DNA / MRNA] OF 269-1382</scope>
    <scope>FUNCTION</scope>
    <scope>CATALYTIC ACTIVITY</scope>
    <scope>INTERACTION WITH LDL1/SWP1</scope>
    <scope>DISRUPTION PHENOTYPE</scope>
    <scope>SUBCELLULAR LOCATION</scope>
    <scope>SUBUNIT</scope>
</reference>
<reference key="5">
    <citation type="journal article" date="2001" name="Nucleic Acids Res.">
        <title>The Arabidopsis thaliana genome contains at least 29 active genes encoding SET domain proteins that can be assigned to four evolutionarily conserved classes.</title>
        <authorList>
            <person name="Baumbusch L.O."/>
            <person name="Thorstensen T."/>
            <person name="Krauss V."/>
            <person name="Fischer A."/>
            <person name="Naumann K."/>
            <person name="Assalkhou R."/>
            <person name="Schulz I."/>
            <person name="Reuter G."/>
            <person name="Aalen R.B."/>
        </authorList>
    </citation>
    <scope>NOMENCLATURE</scope>
</reference>
<reference key="6">
    <citation type="journal article" date="2012" name="PLoS Genet.">
        <title>The SET-domain protein SUVR5 mediates H3K9me2 deposition and silencing at stimulus response genes in a DNA methylation-independent manner.</title>
        <authorList>
            <person name="Caro E."/>
            <person name="Stroud H."/>
            <person name="Greenberg M.V."/>
            <person name="Bernatavichute Y.V."/>
            <person name="Feng S."/>
            <person name="Groth M."/>
            <person name="Vashisht A.A."/>
            <person name="Wohlschlegel J."/>
            <person name="Jacobsen S.E."/>
        </authorList>
    </citation>
    <scope>FUNCTION</scope>
    <scope>DISRUPTION PHENOTYPE</scope>
</reference>
<proteinExistence type="evidence at protein level"/>
<organism>
    <name type="scientific">Arabidopsis thaliana</name>
    <name type="common">Mouse-ear cress</name>
    <dbReference type="NCBI Taxonomy" id="3702"/>
    <lineage>
        <taxon>Eukaryota</taxon>
        <taxon>Viridiplantae</taxon>
        <taxon>Streptophyta</taxon>
        <taxon>Embryophyta</taxon>
        <taxon>Tracheophyta</taxon>
        <taxon>Spermatophyta</taxon>
        <taxon>Magnoliopsida</taxon>
        <taxon>eudicotyledons</taxon>
        <taxon>Gunneridae</taxon>
        <taxon>Pentapetalae</taxon>
        <taxon>rosids</taxon>
        <taxon>malvids</taxon>
        <taxon>Brassicales</taxon>
        <taxon>Brassicaceae</taxon>
        <taxon>Camelineae</taxon>
        <taxon>Arabidopsis</taxon>
    </lineage>
</organism>
<gene>
    <name evidence="12" type="primary">SUVR5</name>
    <name evidence="11" type="synonym">CZS</name>
    <name type="synonym">SDG6</name>
    <name type="synonym">SET6</name>
    <name evidence="14" type="ordered locus">At2g23740</name>
    <name evidence="15" type="ORF">F27L4.7</name>
    <name evidence="16" type="ORF">F27L4.8</name>
    <name evidence="17" type="ORF">F27L4.9</name>
</gene>
<comment type="function">
    <text evidence="9 10">Histone methyltransferase that functions together with its binding partner LDL1/SWP1 as one of the regulators of flower timing in Arabidopsis (PubMed:17224141). Mediates H3K9me2 deposition and regulates gene expression in a DNA methylation-independent manner. Binds DNA through its zinc fingers and represses the expression of a subset of stimulus response genes. May represent a novel mechanism for plants to regulate their chromatin and transcriptional state, which may allow for the adaptability and modulation necessary to rapidly respond to environment or developmental cues (PubMed:23071452).</text>
</comment>
<comment type="catalytic activity">
    <reaction evidence="9">
        <text>L-lysyl-[histone] + S-adenosyl-L-methionine = N(6)-methyl-L-lysyl-[histone] + S-adenosyl-L-homocysteine + H(+)</text>
        <dbReference type="Rhea" id="RHEA:10024"/>
        <dbReference type="Rhea" id="RHEA-COMP:9845"/>
        <dbReference type="Rhea" id="RHEA-COMP:9846"/>
        <dbReference type="ChEBI" id="CHEBI:15378"/>
        <dbReference type="ChEBI" id="CHEBI:29969"/>
        <dbReference type="ChEBI" id="CHEBI:57856"/>
        <dbReference type="ChEBI" id="CHEBI:59789"/>
        <dbReference type="ChEBI" id="CHEBI:61929"/>
    </reaction>
</comment>
<comment type="subunit">
    <text evidence="9">Component of a regulatory complex with LDL1/SWP1 (PubMed:17224141). Interacts with LDL1/SWP1 (PubMed:17224141).</text>
</comment>
<comment type="subcellular location">
    <subcellularLocation>
        <location evidence="9">Nucleus</location>
    </subcellularLocation>
    <subcellularLocation>
        <location evidence="2">Chromosome</location>
    </subcellularLocation>
    <text evidence="2">Associates with euchromatic regions.</text>
</comment>
<comment type="alternative products">
    <event type="alternative splicing"/>
    <isoform>
        <id>O64827-1</id>
        <name>1</name>
        <sequence type="displayed"/>
    </isoform>
    <text>A number of isoforms are produced. According to EST sequences.</text>
</comment>
<comment type="domain">
    <text evidence="1">In the pre-SET domain, Cys residues bind 3 zinc ions that are arranged in a triangular cluster; some of these Cys residues contribute to the binding of two zinc ions within the cluster.</text>
</comment>
<comment type="disruption phenotype">
    <text evidence="9 10">Displays reduced dimethylation of lysine 9 and lysine 27 of histone H3 and hyperacetylation of histone H4 within the FLC locus and shows a moderate delayed flowering (PubMed:17224141). Delayed flowering (PubMed:23071452).</text>
</comment>
<comment type="similarity">
    <text evidence="7">Belongs to the class V-like SAM-binding methyltransferase superfamily.</text>
</comment>
<comment type="sequence caution" evidence="13">
    <conflict type="erroneous gene model prediction">
        <sequence resource="EMBL-CDS" id="AAC17088"/>
    </conflict>
    <text>Was originally thought to correspond to three different genes At2g23730, At2g23740 and At2g23750.</text>
</comment>
<comment type="sequence caution" evidence="13">
    <conflict type="erroneous gene model prediction">
        <sequence resource="EMBL-CDS" id="AAC17089"/>
    </conflict>
    <text>Was originally thought to correspond to three different genes At2g23730, At2g23740 and At2g23750.</text>
</comment>
<comment type="sequence caution" evidence="13">
    <conflict type="erroneous gene model prediction">
        <sequence resource="EMBL-CDS" id="AAC17099"/>
    </conflict>
    <text>Was originally thought to correspond to three different genes At2g23730, At2g23740 and At2g23750.</text>
</comment>
<protein>
    <recommendedName>
        <fullName evidence="12">Histone-lysine N-methyltransferase SUVR5</fullName>
        <ecNumber evidence="9">2.1.1.-</ecNumber>
    </recommendedName>
    <alternativeName>
        <fullName evidence="11">C2H2 zinc finger-SET histone methyltransferase</fullName>
        <shortName evidence="11">Protein C2H2 SET</shortName>
    </alternativeName>
    <alternativeName>
        <fullName>Protein SET DOMAIN GROUP 6</fullName>
    </alternativeName>
    <alternativeName>
        <fullName evidence="12">Suppressor of variegation 3-9-related protein 5</fullName>
        <shortName evidence="12">Su(var)3-9-related protein 5</shortName>
    </alternativeName>
</protein>